<dbReference type="EC" id="3.4.21.-"/>
<dbReference type="EMBL" id="JU173723">
    <property type="protein sequence ID" value="AFJ49249.1"/>
    <property type="molecule type" value="mRNA"/>
</dbReference>
<dbReference type="SMR" id="J3RY93"/>
<dbReference type="GO" id="GO:0005576">
    <property type="term" value="C:extracellular region"/>
    <property type="evidence" value="ECO:0007669"/>
    <property type="project" value="UniProtKB-SubCell"/>
</dbReference>
<dbReference type="GO" id="GO:0030141">
    <property type="term" value="C:secretory granule"/>
    <property type="evidence" value="ECO:0007669"/>
    <property type="project" value="TreeGrafter"/>
</dbReference>
<dbReference type="GO" id="GO:0004252">
    <property type="term" value="F:serine-type endopeptidase activity"/>
    <property type="evidence" value="ECO:0007669"/>
    <property type="project" value="InterPro"/>
</dbReference>
<dbReference type="GO" id="GO:0090729">
    <property type="term" value="F:toxin activity"/>
    <property type="evidence" value="ECO:0007669"/>
    <property type="project" value="UniProtKB-KW"/>
</dbReference>
<dbReference type="GO" id="GO:0006508">
    <property type="term" value="P:proteolysis"/>
    <property type="evidence" value="ECO:0007669"/>
    <property type="project" value="UniProtKB-KW"/>
</dbReference>
<dbReference type="CDD" id="cd00190">
    <property type="entry name" value="Tryp_SPc"/>
    <property type="match status" value="1"/>
</dbReference>
<dbReference type="FunFam" id="2.40.10.10:FF:000158">
    <property type="entry name" value="Thrombin-like enzyme saxthrombin"/>
    <property type="match status" value="1"/>
</dbReference>
<dbReference type="FunFam" id="2.40.10.10:FF:000153">
    <property type="entry name" value="Venom plasminogen activator TSV-PA"/>
    <property type="match status" value="1"/>
</dbReference>
<dbReference type="Gene3D" id="2.40.10.10">
    <property type="entry name" value="Trypsin-like serine proteases"/>
    <property type="match status" value="2"/>
</dbReference>
<dbReference type="InterPro" id="IPR009003">
    <property type="entry name" value="Peptidase_S1_PA"/>
</dbReference>
<dbReference type="InterPro" id="IPR043504">
    <property type="entry name" value="Peptidase_S1_PA_chymotrypsin"/>
</dbReference>
<dbReference type="InterPro" id="IPR001314">
    <property type="entry name" value="Peptidase_S1A"/>
</dbReference>
<dbReference type="InterPro" id="IPR001254">
    <property type="entry name" value="Trypsin_dom"/>
</dbReference>
<dbReference type="InterPro" id="IPR018114">
    <property type="entry name" value="TRYPSIN_HIS"/>
</dbReference>
<dbReference type="InterPro" id="IPR033116">
    <property type="entry name" value="TRYPSIN_SER"/>
</dbReference>
<dbReference type="PANTHER" id="PTHR24271:SF47">
    <property type="entry name" value="KALLIKREIN-1"/>
    <property type="match status" value="1"/>
</dbReference>
<dbReference type="PANTHER" id="PTHR24271">
    <property type="entry name" value="KALLIKREIN-RELATED"/>
    <property type="match status" value="1"/>
</dbReference>
<dbReference type="Pfam" id="PF00089">
    <property type="entry name" value="Trypsin"/>
    <property type="match status" value="1"/>
</dbReference>
<dbReference type="PRINTS" id="PR00722">
    <property type="entry name" value="CHYMOTRYPSIN"/>
</dbReference>
<dbReference type="SMART" id="SM00020">
    <property type="entry name" value="Tryp_SPc"/>
    <property type="match status" value="1"/>
</dbReference>
<dbReference type="SUPFAM" id="SSF50494">
    <property type="entry name" value="Trypsin-like serine proteases"/>
    <property type="match status" value="1"/>
</dbReference>
<dbReference type="PROSITE" id="PS50240">
    <property type="entry name" value="TRYPSIN_DOM"/>
    <property type="match status" value="1"/>
</dbReference>
<dbReference type="PROSITE" id="PS00134">
    <property type="entry name" value="TRYPSIN_HIS"/>
    <property type="match status" value="1"/>
</dbReference>
<dbReference type="PROSITE" id="PS00135">
    <property type="entry name" value="TRYPSIN_SER"/>
    <property type="match status" value="1"/>
</dbReference>
<proteinExistence type="evidence at protein level"/>
<name>VSPC_CROAD</name>
<accession>J3RY93</accession>
<protein>
    <recommendedName>
        <fullName>Snake venom serine proteinase 12</fullName>
        <shortName>SVSP</shortName>
        <ecNumber>3.4.21.-</ecNumber>
    </recommendedName>
</protein>
<comment type="function">
    <text evidence="1">Snake venom serine protease that may act in the hemostasis system of the prey.</text>
</comment>
<comment type="subunit">
    <text evidence="1">Monomer.</text>
</comment>
<comment type="subcellular location">
    <subcellularLocation>
        <location>Secreted</location>
    </subcellularLocation>
</comment>
<comment type="tissue specificity">
    <text>Expressed by the venom gland.</text>
</comment>
<comment type="similarity">
    <text evidence="3">Belongs to the peptidase S1 family. Snake venom subfamily.</text>
</comment>
<organism>
    <name type="scientific">Crotalus adamanteus</name>
    <name type="common">Eastern diamondback rattlesnake</name>
    <dbReference type="NCBI Taxonomy" id="8729"/>
    <lineage>
        <taxon>Eukaryota</taxon>
        <taxon>Metazoa</taxon>
        <taxon>Chordata</taxon>
        <taxon>Craniata</taxon>
        <taxon>Vertebrata</taxon>
        <taxon>Euteleostomi</taxon>
        <taxon>Lepidosauria</taxon>
        <taxon>Squamata</taxon>
        <taxon>Bifurcata</taxon>
        <taxon>Unidentata</taxon>
        <taxon>Episquamata</taxon>
        <taxon>Toxicofera</taxon>
        <taxon>Serpentes</taxon>
        <taxon>Colubroidea</taxon>
        <taxon>Viperidae</taxon>
        <taxon>Crotalinae</taxon>
        <taxon>Crotalus</taxon>
    </lineage>
</organism>
<reference key="1">
    <citation type="journal article" date="2012" name="BMC Genomics">
        <title>The venom-gland transcriptome of the eastern diamondback rattlesnake (Crotalus adamanteus).</title>
        <authorList>
            <person name="Rokyta D.R."/>
            <person name="Lemmon A.R."/>
            <person name="Margres M.J."/>
            <person name="Aronow K."/>
        </authorList>
    </citation>
    <scope>NUCLEOTIDE SEQUENCE [MRNA]</scope>
    <source>
        <tissue>Venom gland</tissue>
    </source>
</reference>
<reference key="2">
    <citation type="journal article" date="2014" name="J. Proteomics">
        <title>Linking the transcriptome and proteome to characterize the venom of the eastern diamondback rattlesnake (Crotalus adamanteus).</title>
        <authorList>
            <person name="Margres M.J."/>
            <person name="McGivern J.J."/>
            <person name="Wray K.P."/>
            <person name="Seavy M."/>
            <person name="Calvin K."/>
            <person name="Rokyta D.R."/>
        </authorList>
    </citation>
    <scope>IDENTIFICATION BY MASS SPECTROMETRY</scope>
    <source>
        <tissue>Venom</tissue>
    </source>
</reference>
<sequence>MVLIRVLANLLILQLSYAQKSSELVIGGDECNINEHRFLVALYDPDRFLCSGILLNEEWVLTAAHCDRRNIRIKLGMHSKTVPNEDEQTRVPKEKFFCLSSKNYTLWDKDIMLIRLDSPVSNSEHIAPLSLPSSPPSVGSVCRIMGWGRISPSKETYPDVPHCANINLLDYEVCLAAYPEFGLPATSKTLCAGILEGGKDTCVGDSGGPLICNGQFQGILSWGNDVCGYILQPALYTRVFDHLDWIQSIIAGNTDVTCPP</sequence>
<evidence type="ECO:0000250" key="1"/>
<evidence type="ECO:0000255" key="2"/>
<evidence type="ECO:0000255" key="3">
    <source>
        <dbReference type="PROSITE-ProRule" id="PRU00274"/>
    </source>
</evidence>
<feature type="signal peptide" evidence="2">
    <location>
        <begin position="1"/>
        <end position="18"/>
    </location>
</feature>
<feature type="propeptide" id="PRO_0000425645" evidence="1">
    <location>
        <begin position="19"/>
        <end position="24"/>
    </location>
</feature>
<feature type="chain" id="PRO_0000425646" description="Snake venom serine proteinase 12">
    <location>
        <begin position="25"/>
        <end position="260"/>
    </location>
</feature>
<feature type="domain" description="Peptidase S1" evidence="3">
    <location>
        <begin position="25"/>
        <end position="251"/>
    </location>
</feature>
<feature type="active site" description="Charge relay system" evidence="1">
    <location>
        <position position="65"/>
    </location>
</feature>
<feature type="active site" description="Charge relay system" evidence="1">
    <location>
        <position position="110"/>
    </location>
</feature>
<feature type="active site" description="Charge relay system" evidence="1">
    <location>
        <position position="206"/>
    </location>
</feature>
<feature type="glycosylation site" description="N-linked (GlcNAc...) asparagine" evidence="2">
    <location>
        <position position="103"/>
    </location>
</feature>
<feature type="disulfide bond" evidence="3">
    <location>
        <begin position="31"/>
        <end position="163"/>
    </location>
</feature>
<feature type="disulfide bond" evidence="3">
    <location>
        <begin position="50"/>
        <end position="66"/>
    </location>
</feature>
<feature type="disulfide bond" evidence="3">
    <location>
        <begin position="98"/>
        <end position="258"/>
    </location>
</feature>
<feature type="disulfide bond" evidence="3">
    <location>
        <begin position="142"/>
        <end position="212"/>
    </location>
</feature>
<feature type="disulfide bond" evidence="3">
    <location>
        <begin position="174"/>
        <end position="191"/>
    </location>
</feature>
<feature type="disulfide bond" evidence="3">
    <location>
        <begin position="202"/>
        <end position="227"/>
    </location>
</feature>
<keyword id="KW-1015">Disulfide bond</keyword>
<keyword id="KW-0325">Glycoprotein</keyword>
<keyword id="KW-1199">Hemostasis impairing toxin</keyword>
<keyword id="KW-0378">Hydrolase</keyword>
<keyword id="KW-0645">Protease</keyword>
<keyword id="KW-0964">Secreted</keyword>
<keyword id="KW-0720">Serine protease</keyword>
<keyword id="KW-0732">Signal</keyword>
<keyword id="KW-0800">Toxin</keyword>
<keyword id="KW-0865">Zymogen</keyword>